<dbReference type="EC" id="2.3.1.286" evidence="1 2"/>
<dbReference type="EMBL" id="CP000050">
    <property type="protein sequence ID" value="AAY47403.1"/>
    <property type="molecule type" value="Genomic_DNA"/>
</dbReference>
<dbReference type="RefSeq" id="WP_011035561.1">
    <property type="nucleotide sequence ID" value="NC_007086.1"/>
</dbReference>
<dbReference type="SMR" id="Q4UZX0"/>
<dbReference type="KEGG" id="xcb:XC_0318"/>
<dbReference type="HOGENOM" id="CLU_023643_3_2_6"/>
<dbReference type="Proteomes" id="UP000000420">
    <property type="component" value="Chromosome"/>
</dbReference>
<dbReference type="GO" id="GO:0005737">
    <property type="term" value="C:cytoplasm"/>
    <property type="evidence" value="ECO:0007669"/>
    <property type="project" value="UniProtKB-SubCell"/>
</dbReference>
<dbReference type="GO" id="GO:0017136">
    <property type="term" value="F:histone deacetylase activity, NAD-dependent"/>
    <property type="evidence" value="ECO:0007669"/>
    <property type="project" value="TreeGrafter"/>
</dbReference>
<dbReference type="GO" id="GO:0070403">
    <property type="term" value="F:NAD+ binding"/>
    <property type="evidence" value="ECO:0007669"/>
    <property type="project" value="UniProtKB-UniRule"/>
</dbReference>
<dbReference type="GO" id="GO:0008270">
    <property type="term" value="F:zinc ion binding"/>
    <property type="evidence" value="ECO:0007669"/>
    <property type="project" value="UniProtKB-UniRule"/>
</dbReference>
<dbReference type="CDD" id="cd01409">
    <property type="entry name" value="SIRT4"/>
    <property type="match status" value="1"/>
</dbReference>
<dbReference type="Gene3D" id="3.30.1600.10">
    <property type="entry name" value="SIR2/SIRT2 'Small Domain"/>
    <property type="match status" value="1"/>
</dbReference>
<dbReference type="Gene3D" id="3.40.50.1220">
    <property type="entry name" value="TPP-binding domain"/>
    <property type="match status" value="1"/>
</dbReference>
<dbReference type="HAMAP" id="MF_01967">
    <property type="entry name" value="Sirtuin_ClassII"/>
    <property type="match status" value="1"/>
</dbReference>
<dbReference type="InterPro" id="IPR029035">
    <property type="entry name" value="DHS-like_NAD/FAD-binding_dom"/>
</dbReference>
<dbReference type="InterPro" id="IPR050134">
    <property type="entry name" value="NAD-dep_sirtuin_deacylases"/>
</dbReference>
<dbReference type="InterPro" id="IPR003000">
    <property type="entry name" value="Sirtuin"/>
</dbReference>
<dbReference type="InterPro" id="IPR026591">
    <property type="entry name" value="Sirtuin_cat_small_dom_sf"/>
</dbReference>
<dbReference type="InterPro" id="IPR026587">
    <property type="entry name" value="Sirtuin_class_II"/>
</dbReference>
<dbReference type="InterPro" id="IPR026590">
    <property type="entry name" value="Ssirtuin_cat_dom"/>
</dbReference>
<dbReference type="NCBIfam" id="NF003738">
    <property type="entry name" value="PRK05333.1"/>
    <property type="match status" value="1"/>
</dbReference>
<dbReference type="PANTHER" id="PTHR11085">
    <property type="entry name" value="NAD-DEPENDENT PROTEIN DEACYLASE SIRTUIN-5, MITOCHONDRIAL-RELATED"/>
    <property type="match status" value="1"/>
</dbReference>
<dbReference type="PANTHER" id="PTHR11085:SF10">
    <property type="entry name" value="NAD-DEPENDENT PROTEIN DEACYLASE SIRTUIN-5, MITOCHONDRIAL-RELATED"/>
    <property type="match status" value="1"/>
</dbReference>
<dbReference type="Pfam" id="PF02146">
    <property type="entry name" value="SIR2"/>
    <property type="match status" value="1"/>
</dbReference>
<dbReference type="SUPFAM" id="SSF52467">
    <property type="entry name" value="DHS-like NAD/FAD-binding domain"/>
    <property type="match status" value="1"/>
</dbReference>
<dbReference type="PROSITE" id="PS50305">
    <property type="entry name" value="SIRTUIN"/>
    <property type="match status" value="1"/>
</dbReference>
<name>NPD_XANC8</name>
<accession>Q4UZX0</accession>
<keyword id="KW-0963">Cytoplasm</keyword>
<keyword id="KW-0479">Metal-binding</keyword>
<keyword id="KW-0520">NAD</keyword>
<keyword id="KW-0808">Transferase</keyword>
<keyword id="KW-0862">Zinc</keyword>
<evidence type="ECO:0000255" key="1">
    <source>
        <dbReference type="HAMAP-Rule" id="MF_01967"/>
    </source>
</evidence>
<evidence type="ECO:0000255" key="2">
    <source>
        <dbReference type="PROSITE-ProRule" id="PRU00236"/>
    </source>
</evidence>
<reference key="1">
    <citation type="journal article" date="2005" name="Genome Res.">
        <title>Comparative and functional genomic analyses of the pathogenicity of phytopathogen Xanthomonas campestris pv. campestris.</title>
        <authorList>
            <person name="Qian W."/>
            <person name="Jia Y."/>
            <person name="Ren S.-X."/>
            <person name="He Y.-Q."/>
            <person name="Feng J.-X."/>
            <person name="Lu L.-F."/>
            <person name="Sun Q."/>
            <person name="Ying G."/>
            <person name="Tang D.-J."/>
            <person name="Tang H."/>
            <person name="Wu W."/>
            <person name="Hao P."/>
            <person name="Wang L."/>
            <person name="Jiang B.-L."/>
            <person name="Zeng S."/>
            <person name="Gu W.-Y."/>
            <person name="Lu G."/>
            <person name="Rong L."/>
            <person name="Tian Y."/>
            <person name="Yao Z."/>
            <person name="Fu G."/>
            <person name="Chen B."/>
            <person name="Fang R."/>
            <person name="Qiang B."/>
            <person name="Chen Z."/>
            <person name="Zhao G.-P."/>
            <person name="Tang J.-L."/>
            <person name="He C."/>
        </authorList>
    </citation>
    <scope>NUCLEOTIDE SEQUENCE [LARGE SCALE GENOMIC DNA]</scope>
    <source>
        <strain>8004</strain>
    </source>
</reference>
<feature type="chain" id="PRO_1000137254" description="NAD-dependent protein deacetylase">
    <location>
        <begin position="1"/>
        <end position="293"/>
    </location>
</feature>
<feature type="domain" description="Deacetylase sirtuin-type" evidence="2">
    <location>
        <begin position="1"/>
        <end position="284"/>
    </location>
</feature>
<feature type="active site" description="Proton acceptor" evidence="2">
    <location>
        <position position="123"/>
    </location>
</feature>
<feature type="binding site" evidence="1">
    <location>
        <begin position="27"/>
        <end position="47"/>
    </location>
    <ligand>
        <name>NAD(+)</name>
        <dbReference type="ChEBI" id="CHEBI:57540"/>
    </ligand>
</feature>
<feature type="binding site" evidence="1">
    <location>
        <begin position="105"/>
        <end position="108"/>
    </location>
    <ligand>
        <name>NAD(+)</name>
        <dbReference type="ChEBI" id="CHEBI:57540"/>
    </ligand>
</feature>
<feature type="binding site" evidence="1">
    <location>
        <position position="131"/>
    </location>
    <ligand>
        <name>Zn(2+)</name>
        <dbReference type="ChEBI" id="CHEBI:29105"/>
    </ligand>
</feature>
<feature type="binding site" evidence="1">
    <location>
        <position position="134"/>
    </location>
    <ligand>
        <name>Zn(2+)</name>
        <dbReference type="ChEBI" id="CHEBI:29105"/>
    </ligand>
</feature>
<feature type="binding site" evidence="1">
    <location>
        <position position="182"/>
    </location>
    <ligand>
        <name>Zn(2+)</name>
        <dbReference type="ChEBI" id="CHEBI:29105"/>
    </ligand>
</feature>
<feature type="binding site" evidence="1">
    <location>
        <position position="185"/>
    </location>
    <ligand>
        <name>Zn(2+)</name>
        <dbReference type="ChEBI" id="CHEBI:29105"/>
    </ligand>
</feature>
<feature type="binding site" evidence="1">
    <location>
        <begin position="222"/>
        <end position="224"/>
    </location>
    <ligand>
        <name>NAD(+)</name>
        <dbReference type="ChEBI" id="CHEBI:57540"/>
    </ligand>
</feature>
<feature type="binding site" evidence="1">
    <location>
        <begin position="248"/>
        <end position="250"/>
    </location>
    <ligand>
        <name>NAD(+)</name>
        <dbReference type="ChEBI" id="CHEBI:57540"/>
    </ligand>
</feature>
<feature type="binding site" evidence="1">
    <location>
        <position position="266"/>
    </location>
    <ligand>
        <name>NAD(+)</name>
        <dbReference type="ChEBI" id="CHEBI:57540"/>
    </ligand>
</feature>
<organism>
    <name type="scientific">Xanthomonas campestris pv. campestris (strain 8004)</name>
    <dbReference type="NCBI Taxonomy" id="314565"/>
    <lineage>
        <taxon>Bacteria</taxon>
        <taxon>Pseudomonadati</taxon>
        <taxon>Pseudomonadota</taxon>
        <taxon>Gammaproteobacteria</taxon>
        <taxon>Lysobacterales</taxon>
        <taxon>Lysobacteraceae</taxon>
        <taxon>Xanthomonas</taxon>
    </lineage>
</organism>
<comment type="function">
    <text evidence="1">NAD-dependent protein deacetylase which modulates the activities of several enzymes which are inactive in their acetylated form.</text>
</comment>
<comment type="catalytic activity">
    <reaction evidence="1">
        <text>N(6)-acetyl-L-lysyl-[protein] + NAD(+) + H2O = 2''-O-acetyl-ADP-D-ribose + nicotinamide + L-lysyl-[protein]</text>
        <dbReference type="Rhea" id="RHEA:43636"/>
        <dbReference type="Rhea" id="RHEA-COMP:9752"/>
        <dbReference type="Rhea" id="RHEA-COMP:10731"/>
        <dbReference type="ChEBI" id="CHEBI:15377"/>
        <dbReference type="ChEBI" id="CHEBI:17154"/>
        <dbReference type="ChEBI" id="CHEBI:29969"/>
        <dbReference type="ChEBI" id="CHEBI:57540"/>
        <dbReference type="ChEBI" id="CHEBI:61930"/>
        <dbReference type="ChEBI" id="CHEBI:83767"/>
        <dbReference type="EC" id="2.3.1.286"/>
    </reaction>
</comment>
<comment type="cofactor">
    <cofactor evidence="1">
        <name>Zn(2+)</name>
        <dbReference type="ChEBI" id="CHEBI:29105"/>
    </cofactor>
    <text evidence="1">Binds 1 zinc ion per subunit.</text>
</comment>
<comment type="subcellular location">
    <subcellularLocation>
        <location evidence="1">Cytoplasm</location>
    </subcellularLocation>
</comment>
<comment type="similarity">
    <text evidence="1">Belongs to the sirtuin family. Class II subfamily.</text>
</comment>
<protein>
    <recommendedName>
        <fullName evidence="1">NAD-dependent protein deacetylase</fullName>
        <ecNumber evidence="1 2">2.3.1.286</ecNumber>
    </recommendedName>
    <alternativeName>
        <fullName evidence="1">Regulatory protein SIR2 homolog</fullName>
    </alternativeName>
</protein>
<gene>
    <name evidence="1" type="primary">cobB</name>
    <name type="ordered locus">XC_0318</name>
</gene>
<proteinExistence type="inferred from homology"/>
<sequence>MTVAITQTGPALQEFVERHQRLFVLSGAGCSTDSGIPDYRDLQGGWKRPQPVTFQAFMGELSTRQRYWARSLVGWPRFGLARPNATHHALAALEARGQLELLLTQNVDRLHQAAGSQAVIDLHGRLDVVRCMGCEQRMPRTEFQLLLERDNPGWADLEAAQAPDGDADLDNVAFDNFVVPACPACGGVLKPDVVFFGENVPRERVERAFAHLQAADAVLVVGSSLMVYSGFRFVQAAARAGLPIAALNFGRTRADDLLSLKVEQSCAQALAFLQQPPDPLHTATARYHSARSA</sequence>